<feature type="chain" id="PRO_0000405541" description="Uncharacterized protein in est 3'region">
    <location>
        <begin position="1"/>
        <end position="350" status="greater than"/>
    </location>
</feature>
<feature type="region of interest" description="Disordered" evidence="1">
    <location>
        <begin position="330"/>
        <end position="350"/>
    </location>
</feature>
<feature type="compositionally biased region" description="Basic and acidic residues" evidence="1">
    <location>
        <begin position="331"/>
        <end position="341"/>
    </location>
</feature>
<feature type="non-terminal residue">
    <location>
        <position position="350"/>
    </location>
</feature>
<organism>
    <name type="scientific">Mycobacterium tuberculosis</name>
    <dbReference type="NCBI Taxonomy" id="1773"/>
    <lineage>
        <taxon>Bacteria</taxon>
        <taxon>Bacillati</taxon>
        <taxon>Actinomycetota</taxon>
        <taxon>Actinomycetes</taxon>
        <taxon>Mycobacteriales</taxon>
        <taxon>Mycobacteriaceae</taxon>
        <taxon>Mycobacterium</taxon>
        <taxon>Mycobacterium tuberculosis complex</taxon>
    </lineage>
</organism>
<proteinExistence type="predicted"/>
<protein>
    <recommendedName>
        <fullName>Uncharacterized protein in est 3'region</fullName>
    </recommendedName>
</protein>
<dbReference type="EMBL" id="U60588">
    <property type="protein sequence ID" value="AAB06506.1"/>
    <property type="molecule type" value="Genomic_DNA"/>
</dbReference>
<dbReference type="STRING" id="1806.RN08_4164"/>
<dbReference type="InterPro" id="IPR003870">
    <property type="entry name" value="DUF222"/>
</dbReference>
<dbReference type="Pfam" id="PF02720">
    <property type="entry name" value="DUF222"/>
    <property type="match status" value="1"/>
</dbReference>
<name>Y3EST_MYCTX</name>
<reference key="1">
    <citation type="submission" date="1996-06" db="EMBL/GenBank/DDBJ databases">
        <title>Cloning and characterization of a novel member of the hydratase/isomerase superfamily from Mycobacterium tuberculosis.</title>
        <authorList>
            <person name="Porter S.B."/>
            <person name="Puente J.-L."/>
            <person name="Schoolnik G.K."/>
        </authorList>
    </citation>
    <scope>NUCLEOTIDE SEQUENCE [GENOMIC DNA]</scope>
    <source>
        <strain>3609</strain>
    </source>
</reference>
<accession>Q79C01</accession>
<evidence type="ECO:0000256" key="1">
    <source>
        <dbReference type="SAM" id="MobiDB-lite"/>
    </source>
</evidence>
<sequence>MFEISLSDPVELRDADDAALLAAIEDCARAEVAAGARRLSAIAELTSRRTGNDQRADWACDGWDCAAAEVAAALTVSHRKASGQMHLSLTLNRLPQVAALFLAGQLSARLVSIIAWRTYLVRDPEALSLLDAALAKHATAWGPLSAPKLEKAIDSWIDRYDPAALRRTRISARSRDLCIGDPDEDAGTAALWGRLFATDAAMLDKRLTQLAHGVCDDDPRTIAQRRADALGALAAGADRLTCGCGNSDCPSSAGNHRQATGVVIHVVADAAALGAAPDPRLSGPEPALAPEAPATPAVKPPAALISGGGVVPAPLLAELIRGGAALSRVRHPGDLRSEPHYRPSAKLAEF</sequence>